<keyword id="KW-0066">ATP synthesis</keyword>
<keyword id="KW-0067">ATP-binding</keyword>
<keyword id="KW-0997">Cell inner membrane</keyword>
<keyword id="KW-1003">Cell membrane</keyword>
<keyword id="KW-0139">CF(1)</keyword>
<keyword id="KW-0375">Hydrogen ion transport</keyword>
<keyword id="KW-0406">Ion transport</keyword>
<keyword id="KW-0472">Membrane</keyword>
<keyword id="KW-0547">Nucleotide-binding</keyword>
<keyword id="KW-1278">Translocase</keyword>
<keyword id="KW-0813">Transport</keyword>
<gene>
    <name evidence="1" type="primary">atpA</name>
    <name type="ordered locus">SYO3AOP1_1620</name>
</gene>
<proteinExistence type="inferred from homology"/>
<reference key="1">
    <citation type="journal article" date="2009" name="J. Bacteriol.">
        <title>Complete and draft genome sequences of six members of the Aquificales.</title>
        <authorList>
            <person name="Reysenbach A.-L."/>
            <person name="Hamamura N."/>
            <person name="Podar M."/>
            <person name="Griffiths E."/>
            <person name="Ferreira S."/>
            <person name="Hochstein R."/>
            <person name="Heidelberg J."/>
            <person name="Johnson J."/>
            <person name="Mead D."/>
            <person name="Pohorille A."/>
            <person name="Sarmiento M."/>
            <person name="Schweighofer K."/>
            <person name="Seshadri R."/>
            <person name="Voytek M.A."/>
        </authorList>
    </citation>
    <scope>NUCLEOTIDE SEQUENCE [LARGE SCALE GENOMIC DNA]</scope>
    <source>
        <strain>YO3AOP1</strain>
    </source>
</reference>
<comment type="function">
    <text evidence="1">Produces ATP from ADP in the presence of a proton gradient across the membrane. The alpha chain is a regulatory subunit.</text>
</comment>
<comment type="catalytic activity">
    <reaction evidence="1">
        <text>ATP + H2O + 4 H(+)(in) = ADP + phosphate + 5 H(+)(out)</text>
        <dbReference type="Rhea" id="RHEA:57720"/>
        <dbReference type="ChEBI" id="CHEBI:15377"/>
        <dbReference type="ChEBI" id="CHEBI:15378"/>
        <dbReference type="ChEBI" id="CHEBI:30616"/>
        <dbReference type="ChEBI" id="CHEBI:43474"/>
        <dbReference type="ChEBI" id="CHEBI:456216"/>
        <dbReference type="EC" id="7.1.2.2"/>
    </reaction>
</comment>
<comment type="subunit">
    <text evidence="1">F-type ATPases have 2 components, CF(1) - the catalytic core - and CF(0) - the membrane proton channel. CF(1) has five subunits: alpha(3), beta(3), gamma(1), delta(1), epsilon(1). CF(0) has three main subunits: a(1), b(2) and c(9-12). The alpha and beta chains form an alternating ring which encloses part of the gamma chain. CF(1) is attached to CF(0) by a central stalk formed by the gamma and epsilon chains, while a peripheral stalk is formed by the delta and b chains.</text>
</comment>
<comment type="subcellular location">
    <subcellularLocation>
        <location evidence="1">Cell inner membrane</location>
        <topology evidence="1">Peripheral membrane protein</topology>
    </subcellularLocation>
</comment>
<comment type="similarity">
    <text evidence="1">Belongs to the ATPase alpha/beta chains family.</text>
</comment>
<sequence length="504" mass="54876">MSVIRADEVLESLNKQIEEFQVSANLEEVGTVIQVGDGVARIYGLEKAMMGEMLEFESGIVGVVFNLEEDNVGAVLLGSDVAVREGSIVKRTGKILSVPVGKGLLGRVVDGLGNPIDGKGPLTDIAYYSPVEKIAPGVVKRKSVHEPLQTGIKAIDAMIPIGRGQRELIIGDRATGKTTIAIDTILNQKGQGVYCIYVAIGQKRANVVHIVETLQKHGAMEYTTVVAATSSDPATMQYIAPFVGCTIGEYFRDNGMHALVIYDDLTKHAYAYRQLSLLLRRPPGREAYPGDVFYLHSRLLERAAKLNDELGAGSLTALPIIETQAGDVAAYIPTNVISITDGQIFLEADLFYKGIRPAINAGISVSRVGGAAQIKAMKQVAGTLRLDLAQYRELEAFVQFASELDKATQAQIARGQRMVELLKQPPNQPVPVEKQVAIIYVAGQGYLDDVSVNAIQKFEKEFYVFLDTEKPDILEAIRREKALTDDIKAKLDAAVKEFKQKVAF</sequence>
<dbReference type="EC" id="7.1.2.2" evidence="1"/>
<dbReference type="EMBL" id="CP001080">
    <property type="protein sequence ID" value="ACD67218.1"/>
    <property type="molecule type" value="Genomic_DNA"/>
</dbReference>
<dbReference type="RefSeq" id="WP_012460274.1">
    <property type="nucleotide sequence ID" value="NC_010730.1"/>
</dbReference>
<dbReference type="SMR" id="B2V6N6"/>
<dbReference type="STRING" id="436114.SYO3AOP1_1620"/>
<dbReference type="KEGG" id="sul:SYO3AOP1_1620"/>
<dbReference type="eggNOG" id="COG0056">
    <property type="taxonomic scope" value="Bacteria"/>
</dbReference>
<dbReference type="HOGENOM" id="CLU_010091_2_1_0"/>
<dbReference type="GO" id="GO:0005886">
    <property type="term" value="C:plasma membrane"/>
    <property type="evidence" value="ECO:0007669"/>
    <property type="project" value="UniProtKB-SubCell"/>
</dbReference>
<dbReference type="GO" id="GO:0045259">
    <property type="term" value="C:proton-transporting ATP synthase complex"/>
    <property type="evidence" value="ECO:0007669"/>
    <property type="project" value="UniProtKB-KW"/>
</dbReference>
<dbReference type="GO" id="GO:0043531">
    <property type="term" value="F:ADP binding"/>
    <property type="evidence" value="ECO:0007669"/>
    <property type="project" value="TreeGrafter"/>
</dbReference>
<dbReference type="GO" id="GO:0005524">
    <property type="term" value="F:ATP binding"/>
    <property type="evidence" value="ECO:0007669"/>
    <property type="project" value="UniProtKB-UniRule"/>
</dbReference>
<dbReference type="GO" id="GO:0046933">
    <property type="term" value="F:proton-transporting ATP synthase activity, rotational mechanism"/>
    <property type="evidence" value="ECO:0007669"/>
    <property type="project" value="UniProtKB-UniRule"/>
</dbReference>
<dbReference type="CDD" id="cd18113">
    <property type="entry name" value="ATP-synt_F1_alpha_C"/>
    <property type="match status" value="1"/>
</dbReference>
<dbReference type="CDD" id="cd18116">
    <property type="entry name" value="ATP-synt_F1_alpha_N"/>
    <property type="match status" value="1"/>
</dbReference>
<dbReference type="CDD" id="cd01132">
    <property type="entry name" value="F1-ATPase_alpha_CD"/>
    <property type="match status" value="1"/>
</dbReference>
<dbReference type="FunFam" id="1.20.150.20:FF:000001">
    <property type="entry name" value="ATP synthase subunit alpha"/>
    <property type="match status" value="1"/>
</dbReference>
<dbReference type="FunFam" id="2.40.30.20:FF:000001">
    <property type="entry name" value="ATP synthase subunit alpha"/>
    <property type="match status" value="1"/>
</dbReference>
<dbReference type="FunFam" id="3.40.50.300:FF:000002">
    <property type="entry name" value="ATP synthase subunit alpha"/>
    <property type="match status" value="1"/>
</dbReference>
<dbReference type="Gene3D" id="2.40.30.20">
    <property type="match status" value="1"/>
</dbReference>
<dbReference type="Gene3D" id="1.20.150.20">
    <property type="entry name" value="ATP synthase alpha/beta chain, C-terminal domain"/>
    <property type="match status" value="1"/>
</dbReference>
<dbReference type="Gene3D" id="3.40.50.300">
    <property type="entry name" value="P-loop containing nucleotide triphosphate hydrolases"/>
    <property type="match status" value="1"/>
</dbReference>
<dbReference type="HAMAP" id="MF_01346">
    <property type="entry name" value="ATP_synth_alpha_bact"/>
    <property type="match status" value="1"/>
</dbReference>
<dbReference type="InterPro" id="IPR023366">
    <property type="entry name" value="ATP_synth_asu-like_sf"/>
</dbReference>
<dbReference type="InterPro" id="IPR000793">
    <property type="entry name" value="ATP_synth_asu_C"/>
</dbReference>
<dbReference type="InterPro" id="IPR038376">
    <property type="entry name" value="ATP_synth_asu_C_sf"/>
</dbReference>
<dbReference type="InterPro" id="IPR033732">
    <property type="entry name" value="ATP_synth_F1_a_nt-bd_dom"/>
</dbReference>
<dbReference type="InterPro" id="IPR005294">
    <property type="entry name" value="ATP_synth_F1_asu"/>
</dbReference>
<dbReference type="InterPro" id="IPR020003">
    <property type="entry name" value="ATPase_a/bsu_AS"/>
</dbReference>
<dbReference type="InterPro" id="IPR004100">
    <property type="entry name" value="ATPase_F1/V1/A1_a/bsu_N"/>
</dbReference>
<dbReference type="InterPro" id="IPR036121">
    <property type="entry name" value="ATPase_F1/V1/A1_a/bsu_N_sf"/>
</dbReference>
<dbReference type="InterPro" id="IPR000194">
    <property type="entry name" value="ATPase_F1/V1/A1_a/bsu_nucl-bd"/>
</dbReference>
<dbReference type="InterPro" id="IPR027417">
    <property type="entry name" value="P-loop_NTPase"/>
</dbReference>
<dbReference type="NCBIfam" id="TIGR00962">
    <property type="entry name" value="atpA"/>
    <property type="match status" value="1"/>
</dbReference>
<dbReference type="NCBIfam" id="NF009884">
    <property type="entry name" value="PRK13343.1"/>
    <property type="match status" value="1"/>
</dbReference>
<dbReference type="PANTHER" id="PTHR48082">
    <property type="entry name" value="ATP SYNTHASE SUBUNIT ALPHA, MITOCHONDRIAL"/>
    <property type="match status" value="1"/>
</dbReference>
<dbReference type="PANTHER" id="PTHR48082:SF2">
    <property type="entry name" value="ATP SYNTHASE SUBUNIT ALPHA, MITOCHONDRIAL"/>
    <property type="match status" value="1"/>
</dbReference>
<dbReference type="Pfam" id="PF00006">
    <property type="entry name" value="ATP-synt_ab"/>
    <property type="match status" value="1"/>
</dbReference>
<dbReference type="Pfam" id="PF00306">
    <property type="entry name" value="ATP-synt_ab_C"/>
    <property type="match status" value="1"/>
</dbReference>
<dbReference type="Pfam" id="PF02874">
    <property type="entry name" value="ATP-synt_ab_N"/>
    <property type="match status" value="1"/>
</dbReference>
<dbReference type="PIRSF" id="PIRSF039088">
    <property type="entry name" value="F_ATPase_subunit_alpha"/>
    <property type="match status" value="1"/>
</dbReference>
<dbReference type="SUPFAM" id="SSF47917">
    <property type="entry name" value="C-terminal domain of alpha and beta subunits of F1 ATP synthase"/>
    <property type="match status" value="1"/>
</dbReference>
<dbReference type="SUPFAM" id="SSF50615">
    <property type="entry name" value="N-terminal domain of alpha and beta subunits of F1 ATP synthase"/>
    <property type="match status" value="1"/>
</dbReference>
<dbReference type="SUPFAM" id="SSF52540">
    <property type="entry name" value="P-loop containing nucleoside triphosphate hydrolases"/>
    <property type="match status" value="1"/>
</dbReference>
<dbReference type="PROSITE" id="PS00152">
    <property type="entry name" value="ATPASE_ALPHA_BETA"/>
    <property type="match status" value="1"/>
</dbReference>
<feature type="chain" id="PRO_1000143447" description="ATP synthase subunit alpha">
    <location>
        <begin position="1"/>
        <end position="504"/>
    </location>
</feature>
<feature type="binding site" evidence="1">
    <location>
        <begin position="171"/>
        <end position="178"/>
    </location>
    <ligand>
        <name>ATP</name>
        <dbReference type="ChEBI" id="CHEBI:30616"/>
    </ligand>
</feature>
<feature type="site" description="Required for activity" evidence="1">
    <location>
        <position position="364"/>
    </location>
</feature>
<protein>
    <recommendedName>
        <fullName evidence="1">ATP synthase subunit alpha</fullName>
        <ecNumber evidence="1">7.1.2.2</ecNumber>
    </recommendedName>
    <alternativeName>
        <fullName evidence="1">ATP synthase F1 sector subunit alpha</fullName>
    </alternativeName>
    <alternativeName>
        <fullName evidence="1">F-ATPase subunit alpha</fullName>
    </alternativeName>
</protein>
<organism>
    <name type="scientific">Sulfurihydrogenibium sp. (strain YO3AOP1)</name>
    <dbReference type="NCBI Taxonomy" id="436114"/>
    <lineage>
        <taxon>Bacteria</taxon>
        <taxon>Pseudomonadati</taxon>
        <taxon>Aquificota</taxon>
        <taxon>Aquificia</taxon>
        <taxon>Aquificales</taxon>
        <taxon>Hydrogenothermaceae</taxon>
        <taxon>Sulfurihydrogenibium</taxon>
    </lineage>
</organism>
<evidence type="ECO:0000255" key="1">
    <source>
        <dbReference type="HAMAP-Rule" id="MF_01346"/>
    </source>
</evidence>
<name>ATPA_SULSY</name>
<accession>B2V6N6</accession>